<organism>
    <name type="scientific">Salmonella gallinarum (strain 287/91 / NCTC 13346)</name>
    <dbReference type="NCBI Taxonomy" id="550538"/>
    <lineage>
        <taxon>Bacteria</taxon>
        <taxon>Pseudomonadati</taxon>
        <taxon>Pseudomonadota</taxon>
        <taxon>Gammaproteobacteria</taxon>
        <taxon>Enterobacterales</taxon>
        <taxon>Enterobacteriaceae</taxon>
        <taxon>Salmonella</taxon>
    </lineage>
</organism>
<proteinExistence type="inferred from homology"/>
<dbReference type="EC" id="4.2.1.20" evidence="1"/>
<dbReference type="EMBL" id="AM933173">
    <property type="protein sequence ID" value="CAR37261.1"/>
    <property type="molecule type" value="Genomic_DNA"/>
</dbReference>
<dbReference type="RefSeq" id="WP_000443029.1">
    <property type="nucleotide sequence ID" value="NC_011274.1"/>
</dbReference>
<dbReference type="SMR" id="B5R6M4"/>
<dbReference type="KEGG" id="seg:SG1388"/>
<dbReference type="HOGENOM" id="CLU_016734_0_4_6"/>
<dbReference type="UniPathway" id="UPA00035">
    <property type="reaction ID" value="UER00044"/>
</dbReference>
<dbReference type="Proteomes" id="UP000008321">
    <property type="component" value="Chromosome"/>
</dbReference>
<dbReference type="GO" id="GO:0005829">
    <property type="term" value="C:cytosol"/>
    <property type="evidence" value="ECO:0007669"/>
    <property type="project" value="TreeGrafter"/>
</dbReference>
<dbReference type="GO" id="GO:0004834">
    <property type="term" value="F:tryptophan synthase activity"/>
    <property type="evidence" value="ECO:0007669"/>
    <property type="project" value="UniProtKB-UniRule"/>
</dbReference>
<dbReference type="CDD" id="cd04724">
    <property type="entry name" value="Tryptophan_synthase_alpha"/>
    <property type="match status" value="1"/>
</dbReference>
<dbReference type="FunFam" id="3.20.20.70:FF:000037">
    <property type="entry name" value="Tryptophan synthase alpha chain"/>
    <property type="match status" value="1"/>
</dbReference>
<dbReference type="Gene3D" id="3.20.20.70">
    <property type="entry name" value="Aldolase class I"/>
    <property type="match status" value="1"/>
</dbReference>
<dbReference type="HAMAP" id="MF_00131">
    <property type="entry name" value="Trp_synth_alpha"/>
    <property type="match status" value="1"/>
</dbReference>
<dbReference type="InterPro" id="IPR013785">
    <property type="entry name" value="Aldolase_TIM"/>
</dbReference>
<dbReference type="InterPro" id="IPR011060">
    <property type="entry name" value="RibuloseP-bd_barrel"/>
</dbReference>
<dbReference type="InterPro" id="IPR018204">
    <property type="entry name" value="Trp_synthase_alpha_AS"/>
</dbReference>
<dbReference type="InterPro" id="IPR002028">
    <property type="entry name" value="Trp_synthase_suA"/>
</dbReference>
<dbReference type="NCBIfam" id="TIGR00262">
    <property type="entry name" value="trpA"/>
    <property type="match status" value="1"/>
</dbReference>
<dbReference type="PANTHER" id="PTHR43406:SF1">
    <property type="entry name" value="TRYPTOPHAN SYNTHASE ALPHA CHAIN, CHLOROPLASTIC"/>
    <property type="match status" value="1"/>
</dbReference>
<dbReference type="PANTHER" id="PTHR43406">
    <property type="entry name" value="TRYPTOPHAN SYNTHASE, ALPHA CHAIN"/>
    <property type="match status" value="1"/>
</dbReference>
<dbReference type="Pfam" id="PF00290">
    <property type="entry name" value="Trp_syntA"/>
    <property type="match status" value="1"/>
</dbReference>
<dbReference type="SUPFAM" id="SSF51366">
    <property type="entry name" value="Ribulose-phoshate binding barrel"/>
    <property type="match status" value="1"/>
</dbReference>
<dbReference type="PROSITE" id="PS00167">
    <property type="entry name" value="TRP_SYNTHASE_ALPHA"/>
    <property type="match status" value="1"/>
</dbReference>
<keyword id="KW-0028">Amino-acid biosynthesis</keyword>
<keyword id="KW-0057">Aromatic amino acid biosynthesis</keyword>
<keyword id="KW-0456">Lyase</keyword>
<keyword id="KW-0822">Tryptophan biosynthesis</keyword>
<feature type="chain" id="PRO_1000095749" description="Tryptophan synthase alpha chain">
    <location>
        <begin position="1"/>
        <end position="268"/>
    </location>
</feature>
<feature type="active site" description="Proton acceptor" evidence="1">
    <location>
        <position position="49"/>
    </location>
</feature>
<feature type="active site" description="Proton acceptor" evidence="1">
    <location>
        <position position="60"/>
    </location>
</feature>
<comment type="function">
    <text evidence="1">The alpha subunit is responsible for the aldol cleavage of indoleglycerol phosphate to indole and glyceraldehyde 3-phosphate.</text>
</comment>
<comment type="catalytic activity">
    <reaction evidence="1">
        <text>(1S,2R)-1-C-(indol-3-yl)glycerol 3-phosphate + L-serine = D-glyceraldehyde 3-phosphate + L-tryptophan + H2O</text>
        <dbReference type="Rhea" id="RHEA:10532"/>
        <dbReference type="ChEBI" id="CHEBI:15377"/>
        <dbReference type="ChEBI" id="CHEBI:33384"/>
        <dbReference type="ChEBI" id="CHEBI:57912"/>
        <dbReference type="ChEBI" id="CHEBI:58866"/>
        <dbReference type="ChEBI" id="CHEBI:59776"/>
        <dbReference type="EC" id="4.2.1.20"/>
    </reaction>
</comment>
<comment type="pathway">
    <text evidence="1">Amino-acid biosynthesis; L-tryptophan biosynthesis; L-tryptophan from chorismate: step 5/5.</text>
</comment>
<comment type="subunit">
    <text evidence="1">Tetramer of two alpha and two beta chains.</text>
</comment>
<comment type="similarity">
    <text evidence="1">Belongs to the TrpA family.</text>
</comment>
<name>TRPA_SALG2</name>
<gene>
    <name evidence="1" type="primary">trpA</name>
    <name type="ordered locus">SG1388</name>
</gene>
<evidence type="ECO:0000255" key="1">
    <source>
        <dbReference type="HAMAP-Rule" id="MF_00131"/>
    </source>
</evidence>
<accession>B5R6M4</accession>
<reference key="1">
    <citation type="journal article" date="2008" name="Genome Res.">
        <title>Comparative genome analysis of Salmonella enteritidis PT4 and Salmonella gallinarum 287/91 provides insights into evolutionary and host adaptation pathways.</title>
        <authorList>
            <person name="Thomson N.R."/>
            <person name="Clayton D.J."/>
            <person name="Windhorst D."/>
            <person name="Vernikos G."/>
            <person name="Davidson S."/>
            <person name="Churcher C."/>
            <person name="Quail M.A."/>
            <person name="Stevens M."/>
            <person name="Jones M.A."/>
            <person name="Watson M."/>
            <person name="Barron A."/>
            <person name="Layton A."/>
            <person name="Pickard D."/>
            <person name="Kingsley R.A."/>
            <person name="Bignell A."/>
            <person name="Clark L."/>
            <person name="Harris B."/>
            <person name="Ormond D."/>
            <person name="Abdellah Z."/>
            <person name="Brooks K."/>
            <person name="Cherevach I."/>
            <person name="Chillingworth T."/>
            <person name="Woodward J."/>
            <person name="Norberczak H."/>
            <person name="Lord A."/>
            <person name="Arrowsmith C."/>
            <person name="Jagels K."/>
            <person name="Moule S."/>
            <person name="Mungall K."/>
            <person name="Saunders M."/>
            <person name="Whitehead S."/>
            <person name="Chabalgoity J.A."/>
            <person name="Maskell D."/>
            <person name="Humphreys T."/>
            <person name="Roberts M."/>
            <person name="Barrow P.A."/>
            <person name="Dougan G."/>
            <person name="Parkhill J."/>
        </authorList>
    </citation>
    <scope>NUCLEOTIDE SEQUENCE [LARGE SCALE GENOMIC DNA]</scope>
    <source>
        <strain>287/91 / NCTC 13346</strain>
    </source>
</reference>
<protein>
    <recommendedName>
        <fullName evidence="1">Tryptophan synthase alpha chain</fullName>
        <ecNumber evidence="1">4.2.1.20</ecNumber>
    </recommendedName>
</protein>
<sequence length="268" mass="28672">MERYENLFAQLNDRREGAFVPFVTLGDPGIEQSLKIIDTLIDAGADALELGVPFSDPLADGPTIQNANLRAFAAGVTPAQCFEMLALIREKHPTIPIGLLMYANLVFNNGIDAFYARCEQVGVDSVLVADVPVEESAPFRQAALRHNIAPIFICPPNADDDLLRQVASYGRGYTYLLSRSGVTGAENRGALPLHHLIEKLKEYHAAPALQGFGISSPEQVSAAVRAGAAGAISGSAIVKIIEKNLASPEQMLAELRSFVSAMKAASRA</sequence>